<gene>
    <name evidence="1" type="primary">dnaK</name>
    <name type="ordered locus">RPB_0429</name>
</gene>
<reference key="1">
    <citation type="submission" date="2006-01" db="EMBL/GenBank/DDBJ databases">
        <title>Complete sequence of Rhodopseudomonas palustris HaA2.</title>
        <authorList>
            <consortium name="US DOE Joint Genome Institute"/>
            <person name="Copeland A."/>
            <person name="Lucas S."/>
            <person name="Lapidus A."/>
            <person name="Barry K."/>
            <person name="Detter J.C."/>
            <person name="Glavina T."/>
            <person name="Hammon N."/>
            <person name="Israni S."/>
            <person name="Pitluck S."/>
            <person name="Chain P."/>
            <person name="Malfatti S."/>
            <person name="Shin M."/>
            <person name="Vergez L."/>
            <person name="Schmutz J."/>
            <person name="Larimer F."/>
            <person name="Land M."/>
            <person name="Hauser L."/>
            <person name="Pelletier D.A."/>
            <person name="Kyrpides N."/>
            <person name="Anderson I."/>
            <person name="Oda Y."/>
            <person name="Harwood C.S."/>
            <person name="Richardson P."/>
        </authorList>
    </citation>
    <scope>NUCLEOTIDE SEQUENCE [LARGE SCALE GENOMIC DNA]</scope>
    <source>
        <strain>HaA2</strain>
    </source>
</reference>
<proteinExistence type="inferred from homology"/>
<name>DNAK_RHOP2</name>
<feature type="chain" id="PRO_1000059643" description="Chaperone protein DnaK">
    <location>
        <begin position="1"/>
        <end position="633"/>
    </location>
</feature>
<feature type="modified residue" description="Phosphothreonine; by autocatalysis" evidence="1">
    <location>
        <position position="198"/>
    </location>
</feature>
<sequence length="633" mass="68384">MGKVIGIDLGTTNSCVAVMDGKNSKVIENAEGMRTTPSIVAFSDDGERLVGQPAKRQAVTNPERTFFAVKRLVGRRYDDPMVEKDKKLVPYKIVKASNGDAWVEADGQTYSPSQVSAFILQKMKETAEAHLGQKVDQAVITVPAYFNDAQRQATKDAGKIAGLEVLRIINEPTAAALAYGLDKTKAGTIAVYDLGGGTFDVSILEIGDGVFEVKSTNGDTFLGGEDFDMRLVSYLADEFQKEQGINLRNDKLALQRLKEAAEKAKIELSSTTQTEINLPFITADQSGPKHLTMKLTRAKFEALVDDLVQKTIEPCRKALKDAGLTAGEIGEVVLVGGMTRMPKVQEVVKQLFGKEPHKGVNPDEVVAIGAAIQAGVLQGDVKDVLLLDVTPLSLGIETLGGVFTRIIERNTTIPTKKSQVFSTAEDNQNAVTIRVFQGEREMAADNKILGQFDLMGIPPAPRGMPQIEVTFDIDANGIVNVSAKDKATGKEQQIRIQASGGLSDSDIDKMVKDAEANAAEDKKRREAVDAKNHADALVHSTEKALAEHGSKVAEPERRAIEDALSDLRESLKSDDAEVIKAKTNTLAQASMKLGEAMYTQQAESDAAKHAAKDDIVDADFTEVDDDKNNKKSA</sequence>
<comment type="function">
    <text evidence="1">Acts as a chaperone.</text>
</comment>
<comment type="induction">
    <text evidence="1">By stress conditions e.g. heat shock.</text>
</comment>
<comment type="similarity">
    <text evidence="1">Belongs to the heat shock protein 70 family.</text>
</comment>
<organism>
    <name type="scientific">Rhodopseudomonas palustris (strain HaA2)</name>
    <dbReference type="NCBI Taxonomy" id="316058"/>
    <lineage>
        <taxon>Bacteria</taxon>
        <taxon>Pseudomonadati</taxon>
        <taxon>Pseudomonadota</taxon>
        <taxon>Alphaproteobacteria</taxon>
        <taxon>Hyphomicrobiales</taxon>
        <taxon>Nitrobacteraceae</taxon>
        <taxon>Rhodopseudomonas</taxon>
    </lineage>
</organism>
<keyword id="KW-0067">ATP-binding</keyword>
<keyword id="KW-0143">Chaperone</keyword>
<keyword id="KW-0547">Nucleotide-binding</keyword>
<keyword id="KW-0597">Phosphoprotein</keyword>
<keyword id="KW-1185">Reference proteome</keyword>
<keyword id="KW-0346">Stress response</keyword>
<protein>
    <recommendedName>
        <fullName evidence="1">Chaperone protein DnaK</fullName>
    </recommendedName>
    <alternativeName>
        <fullName evidence="1">HSP70</fullName>
    </alternativeName>
    <alternativeName>
        <fullName evidence="1">Heat shock 70 kDa protein</fullName>
    </alternativeName>
    <alternativeName>
        <fullName evidence="1">Heat shock protein 70</fullName>
    </alternativeName>
</protein>
<evidence type="ECO:0000255" key="1">
    <source>
        <dbReference type="HAMAP-Rule" id="MF_00332"/>
    </source>
</evidence>
<dbReference type="EMBL" id="CP000250">
    <property type="protein sequence ID" value="ABD05140.1"/>
    <property type="molecule type" value="Genomic_DNA"/>
</dbReference>
<dbReference type="RefSeq" id="WP_011439330.1">
    <property type="nucleotide sequence ID" value="NC_007778.1"/>
</dbReference>
<dbReference type="SMR" id="Q2J320"/>
<dbReference type="STRING" id="316058.RPB_0429"/>
<dbReference type="KEGG" id="rpb:RPB_0429"/>
<dbReference type="eggNOG" id="COG0443">
    <property type="taxonomic scope" value="Bacteria"/>
</dbReference>
<dbReference type="HOGENOM" id="CLU_005965_2_1_5"/>
<dbReference type="OrthoDB" id="9766019at2"/>
<dbReference type="Proteomes" id="UP000008809">
    <property type="component" value="Chromosome"/>
</dbReference>
<dbReference type="GO" id="GO:0005524">
    <property type="term" value="F:ATP binding"/>
    <property type="evidence" value="ECO:0007669"/>
    <property type="project" value="UniProtKB-UniRule"/>
</dbReference>
<dbReference type="GO" id="GO:0140662">
    <property type="term" value="F:ATP-dependent protein folding chaperone"/>
    <property type="evidence" value="ECO:0007669"/>
    <property type="project" value="InterPro"/>
</dbReference>
<dbReference type="GO" id="GO:0051082">
    <property type="term" value="F:unfolded protein binding"/>
    <property type="evidence" value="ECO:0007669"/>
    <property type="project" value="InterPro"/>
</dbReference>
<dbReference type="CDD" id="cd11733">
    <property type="entry name" value="ASKHA_NBD_HSP70_HSPA9"/>
    <property type="match status" value="1"/>
</dbReference>
<dbReference type="FunFam" id="2.60.34.10:FF:000014">
    <property type="entry name" value="Chaperone protein DnaK HSP70"/>
    <property type="match status" value="1"/>
</dbReference>
<dbReference type="FunFam" id="3.30.420.40:FF:000020">
    <property type="entry name" value="Chaperone protein HscA homolog"/>
    <property type="match status" value="1"/>
</dbReference>
<dbReference type="FunFam" id="1.20.1270.10:FF:000001">
    <property type="entry name" value="Molecular chaperone DnaK"/>
    <property type="match status" value="1"/>
</dbReference>
<dbReference type="FunFam" id="3.30.420.40:FF:000004">
    <property type="entry name" value="Molecular chaperone DnaK"/>
    <property type="match status" value="1"/>
</dbReference>
<dbReference type="FunFam" id="3.90.640.10:FF:000003">
    <property type="entry name" value="Molecular chaperone DnaK"/>
    <property type="match status" value="1"/>
</dbReference>
<dbReference type="Gene3D" id="1.20.1270.10">
    <property type="match status" value="1"/>
</dbReference>
<dbReference type="Gene3D" id="3.30.420.40">
    <property type="match status" value="2"/>
</dbReference>
<dbReference type="Gene3D" id="3.90.640.10">
    <property type="entry name" value="Actin, Chain A, domain 4"/>
    <property type="match status" value="1"/>
</dbReference>
<dbReference type="Gene3D" id="2.60.34.10">
    <property type="entry name" value="Substrate Binding Domain Of DNAk, Chain A, domain 1"/>
    <property type="match status" value="1"/>
</dbReference>
<dbReference type="HAMAP" id="MF_00332">
    <property type="entry name" value="DnaK"/>
    <property type="match status" value="1"/>
</dbReference>
<dbReference type="InterPro" id="IPR043129">
    <property type="entry name" value="ATPase_NBD"/>
</dbReference>
<dbReference type="InterPro" id="IPR012725">
    <property type="entry name" value="Chaperone_DnaK"/>
</dbReference>
<dbReference type="InterPro" id="IPR018181">
    <property type="entry name" value="Heat_shock_70_CS"/>
</dbReference>
<dbReference type="InterPro" id="IPR029048">
    <property type="entry name" value="HSP70_C_sf"/>
</dbReference>
<dbReference type="InterPro" id="IPR029047">
    <property type="entry name" value="HSP70_peptide-bd_sf"/>
</dbReference>
<dbReference type="InterPro" id="IPR013126">
    <property type="entry name" value="Hsp_70_fam"/>
</dbReference>
<dbReference type="NCBIfam" id="NF001413">
    <property type="entry name" value="PRK00290.1"/>
    <property type="match status" value="1"/>
</dbReference>
<dbReference type="NCBIfam" id="NF003520">
    <property type="entry name" value="PRK05183.1"/>
    <property type="match status" value="1"/>
</dbReference>
<dbReference type="NCBIfam" id="TIGR02350">
    <property type="entry name" value="prok_dnaK"/>
    <property type="match status" value="1"/>
</dbReference>
<dbReference type="PANTHER" id="PTHR19375">
    <property type="entry name" value="HEAT SHOCK PROTEIN 70KDA"/>
    <property type="match status" value="1"/>
</dbReference>
<dbReference type="Pfam" id="PF00012">
    <property type="entry name" value="HSP70"/>
    <property type="match status" value="1"/>
</dbReference>
<dbReference type="PRINTS" id="PR00301">
    <property type="entry name" value="HEATSHOCK70"/>
</dbReference>
<dbReference type="SUPFAM" id="SSF53067">
    <property type="entry name" value="Actin-like ATPase domain"/>
    <property type="match status" value="2"/>
</dbReference>
<dbReference type="SUPFAM" id="SSF100934">
    <property type="entry name" value="Heat shock protein 70kD (HSP70), C-terminal subdomain"/>
    <property type="match status" value="1"/>
</dbReference>
<dbReference type="SUPFAM" id="SSF100920">
    <property type="entry name" value="Heat shock protein 70kD (HSP70), peptide-binding domain"/>
    <property type="match status" value="1"/>
</dbReference>
<dbReference type="PROSITE" id="PS00297">
    <property type="entry name" value="HSP70_1"/>
    <property type="match status" value="1"/>
</dbReference>
<dbReference type="PROSITE" id="PS00329">
    <property type="entry name" value="HSP70_2"/>
    <property type="match status" value="1"/>
</dbReference>
<dbReference type="PROSITE" id="PS01036">
    <property type="entry name" value="HSP70_3"/>
    <property type="match status" value="1"/>
</dbReference>
<accession>Q2J320</accession>